<protein>
    <recommendedName>
        <fullName>Sulfur globule protein CV3</fullName>
    </recommendedName>
</protein>
<organism>
    <name type="scientific">Allochromatium vinosum (strain ATCC 17899 / DSM 180 / NBRC 103801 / NCIMB 10441 / D)</name>
    <name type="common">Chromatium vinosum</name>
    <dbReference type="NCBI Taxonomy" id="572477"/>
    <lineage>
        <taxon>Bacteria</taxon>
        <taxon>Pseudomonadati</taxon>
        <taxon>Pseudomonadota</taxon>
        <taxon>Gammaproteobacteria</taxon>
        <taxon>Chromatiales</taxon>
        <taxon>Chromatiaceae</taxon>
        <taxon>Allochromatium</taxon>
    </lineage>
</organism>
<sequence>MTMKRLLLVSTLAGASALATLPANAFWGWNPFGWGGGPWDGPWGGGPWGSPWYGGYPYHGGYYPYGLYGVPYGWGAPVYGYPGYVYPGYAYPAPTQPSTKSQ</sequence>
<reference key="1">
    <citation type="journal article" date="1998" name="Arch. Microbiol.">
        <title>Molecular genetic evidence for extracytoplasmic localization of sulfur globules in Chromatium vinosum.</title>
        <authorList>
            <person name="Pattaragulwanit K."/>
            <person name="Brune D.C."/>
            <person name="Trueper H.G."/>
            <person name="Dahl C."/>
        </authorList>
    </citation>
    <scope>NUCLEOTIDE SEQUENCE [GENOMIC DNA]</scope>
</reference>
<reference key="2">
    <citation type="journal article" date="2011" name="Stand. Genomic Sci.">
        <title>Complete genome sequence of Allochromatium vinosum DSM 180(T).</title>
        <authorList>
            <person name="Weissgerber T."/>
            <person name="Zigann R."/>
            <person name="Bruce D."/>
            <person name="Chang Y.J."/>
            <person name="Detter J.C."/>
            <person name="Han C."/>
            <person name="Hauser L."/>
            <person name="Jeffries C.D."/>
            <person name="Land M."/>
            <person name="Munk A.C."/>
            <person name="Tapia R."/>
            <person name="Dahl C."/>
        </authorList>
    </citation>
    <scope>NUCLEOTIDE SEQUENCE [LARGE SCALE GENOMIC DNA]</scope>
    <source>
        <strain>ATCC 17899 / DSM 180 / NBRC 103801 / NCIMB 10441 / D</strain>
    </source>
</reference>
<reference key="3">
    <citation type="journal article" date="1995" name="Arch. Microbiol.">
        <title>Isolation and characterization of sulfur globule proteins from Chromatium vinosum and Thiocapsa roseopersicina.</title>
        <authorList>
            <person name="Brune D.C."/>
        </authorList>
    </citation>
    <scope>PROTEIN SEQUENCE OF 26-78</scope>
    <scope>CHARACTERIZATION</scope>
    <scope>MASS SPECTROMETRY</scope>
</reference>
<feature type="signal peptide" evidence="1">
    <location>
        <begin position="1"/>
        <end position="25"/>
    </location>
</feature>
<feature type="chain" id="PRO_0000022327" description="Sulfur globule protein CV3">
    <location>
        <begin position="26"/>
        <end position="102"/>
    </location>
</feature>
<comment type="function">
    <text>Structural protein of the sulfur globules, which are intracellular globules that serve for sulfur storage in purple sulfur bacteria.</text>
</comment>
<comment type="subunit">
    <text>The protein envelope of the sulfur globules is composed of the three different proteins CV1, CV2 and CV3.</text>
</comment>
<comment type="mass spectrometry"/>
<comment type="similarity">
    <text evidence="2">To T.roseopersicina TR2.</text>
</comment>
<gene>
    <name type="primary">sgpC</name>
    <name type="synonym">sgp3</name>
    <name type="ordered locus">Alvin_1325</name>
</gene>
<evidence type="ECO:0000269" key="1">
    <source>
    </source>
</evidence>
<evidence type="ECO:0000305" key="2"/>
<name>SGP3_ALLVD</name>
<proteinExistence type="evidence at protein level"/>
<dbReference type="EMBL" id="AF017118">
    <property type="protein sequence ID" value="AAB91542.1"/>
    <property type="molecule type" value="Genomic_DNA"/>
</dbReference>
<dbReference type="EMBL" id="CP001896">
    <property type="protein sequence ID" value="ADC62262.1"/>
    <property type="molecule type" value="Genomic_DNA"/>
</dbReference>
<dbReference type="RefSeq" id="WP_012970536.1">
    <property type="nucleotide sequence ID" value="NC_013851.1"/>
</dbReference>
<dbReference type="STRING" id="572477.Alvin_1325"/>
<dbReference type="KEGG" id="alv:Alvin_1325"/>
<dbReference type="eggNOG" id="ENOG50332PU">
    <property type="taxonomic scope" value="Bacteria"/>
</dbReference>
<dbReference type="HOGENOM" id="CLU_2271459_0_0_6"/>
<dbReference type="Proteomes" id="UP000001441">
    <property type="component" value="Chromosome"/>
</dbReference>
<keyword id="KW-0903">Direct protein sequencing</keyword>
<keyword id="KW-1185">Reference proteome</keyword>
<keyword id="KW-0732">Signal</keyword>
<accession>O52055</accession>
<accession>D3RSV3</accession>